<reference key="1">
    <citation type="journal article" date="1991" name="J. Biol. Chem.">
        <title>Molecular characterization of transcription factors that bind to the cAMP responsive region of the substance P precursor gene. cDNA cloning of a novel C/EBP-related factor.</title>
        <authorList>
            <person name="Kageyama R."/>
            <person name="Sasai Y."/>
            <person name="Nakanishi S."/>
        </authorList>
    </citation>
    <scope>NUCLEOTIDE SEQUENCE [MRNA] (ISOFORM 2)</scope>
    <source>
        <tissue>Brain</tissue>
    </source>
</reference>
<reference key="2">
    <citation type="submission" date="1995-10" db="EMBL/GenBank/DDBJ databases">
        <authorList>
            <person name="Muramatsu S."/>
        </authorList>
    </citation>
    <scope>NUCLEOTIDE SEQUENCE [MRNA] (ISOFORM 1)</scope>
    <source>
        <strain>Sprague-Dawley</strain>
        <tissue>Brain</tissue>
    </source>
</reference>
<reference key="3">
    <citation type="journal article" date="2012" name="Nat. Commun.">
        <title>Quantitative maps of protein phosphorylation sites across 14 different rat organs and tissues.</title>
        <authorList>
            <person name="Lundby A."/>
            <person name="Secher A."/>
            <person name="Lage K."/>
            <person name="Nordsborg N.B."/>
            <person name="Dmytriyev A."/>
            <person name="Lundby C."/>
            <person name="Olsen J.V."/>
        </authorList>
    </citation>
    <scope>PHOSPHORYLATION [LARGE SCALE ANALYSIS] AT THR-51; THR-53 AND SER-94</scope>
    <scope>IDENTIFICATION BY MASS SPECTROMETRY [LARGE SCALE ANALYSIS]</scope>
</reference>
<feature type="chain" id="PRO_0000076579" description="Cyclic AMP-dependent transcription factor ATF-2">
    <location>
        <begin position="1"/>
        <end position="487"/>
    </location>
</feature>
<feature type="domain" description="bZIP" evidence="4">
    <location>
        <begin position="334"/>
        <end position="397"/>
    </location>
</feature>
<feature type="zinc finger region" description="C2H2-type" evidence="3">
    <location>
        <begin position="7"/>
        <end position="31"/>
    </location>
</feature>
<feature type="region of interest" description="Disordered" evidence="5">
    <location>
        <begin position="107"/>
        <end position="130"/>
    </location>
</feature>
<feature type="region of interest" description="Disordered" evidence="5">
    <location>
        <begin position="241"/>
        <end position="355"/>
    </location>
</feature>
<feature type="region of interest" description="Essential for its histone acetyltransferase activity" evidence="1">
    <location>
        <begin position="278"/>
        <end position="281"/>
    </location>
</feature>
<feature type="region of interest" description="Basic motif" evidence="4">
    <location>
        <begin position="336"/>
        <end position="356"/>
    </location>
</feature>
<feature type="region of interest" description="Leucine-zipper" evidence="4">
    <location>
        <begin position="362"/>
        <end position="390"/>
    </location>
</feature>
<feature type="region of interest" description="Disordered" evidence="5">
    <location>
        <begin position="407"/>
        <end position="487"/>
    </location>
</feature>
<feature type="short sequence motif" description="Nuclear export signal" evidence="1">
    <location>
        <begin position="387"/>
        <end position="396"/>
    </location>
</feature>
<feature type="compositionally biased region" description="Polar residues" evidence="5">
    <location>
        <begin position="264"/>
        <end position="275"/>
    </location>
</feature>
<feature type="compositionally biased region" description="Low complexity" evidence="5">
    <location>
        <begin position="300"/>
        <end position="316"/>
    </location>
</feature>
<feature type="compositionally biased region" description="Basic and acidic residues" evidence="5">
    <location>
        <begin position="328"/>
        <end position="345"/>
    </location>
</feature>
<feature type="compositionally biased region" description="Polar residues" evidence="5">
    <location>
        <begin position="425"/>
        <end position="436"/>
    </location>
</feature>
<feature type="compositionally biased region" description="Low complexity" evidence="5">
    <location>
        <begin position="437"/>
        <end position="449"/>
    </location>
</feature>
<feature type="compositionally biased region" description="Polar residues" evidence="5">
    <location>
        <begin position="457"/>
        <end position="470"/>
    </location>
</feature>
<feature type="compositionally biased region" description="Polar residues" evidence="5">
    <location>
        <begin position="478"/>
        <end position="487"/>
    </location>
</feature>
<feature type="modified residue" description="Phosphothreonine; by PKC/PRKCH" evidence="2">
    <location>
        <position position="34"/>
    </location>
</feature>
<feature type="modified residue" description="Phosphoserine; by VRK1" evidence="2">
    <location>
        <position position="44"/>
    </location>
</feature>
<feature type="modified residue" description="Phosphothreonine" evidence="8">
    <location>
        <position position="51"/>
    </location>
</feature>
<feature type="modified residue" description="Phosphothreonine" evidence="8">
    <location>
        <position position="53"/>
    </location>
</feature>
<feature type="modified residue" description="Phosphothreonine; by VRK1" evidence="2">
    <location>
        <position position="55"/>
    </location>
</feature>
<feature type="modified residue" description="Phosphoserine" evidence="2">
    <location>
        <position position="72"/>
    </location>
</feature>
<feature type="modified residue" description="Phosphoserine" evidence="8">
    <location>
        <position position="94"/>
    </location>
</feature>
<feature type="modified residue" description="Phosphothreonine" evidence="2">
    <location>
        <position position="98"/>
    </location>
</feature>
<feature type="modified residue" description="Phosphoserine; by PKC/PRKCA and PKC/PRKCB" evidence="2">
    <location>
        <position position="103"/>
    </location>
</feature>
<feature type="modified residue" description="Phosphoserine" evidence="2">
    <location>
        <position position="118"/>
    </location>
</feature>
<feature type="modified residue" description="Phosphoserine" evidence="2">
    <location>
        <position position="310"/>
    </location>
</feature>
<feature type="modified residue" description="Phosphoserine; by PKC/PRKCA and PKC/PRKCB" evidence="2">
    <location>
        <position position="322"/>
    </location>
</feature>
<feature type="modified residue" description="N6-acetyllysine" evidence="2">
    <location>
        <position position="339"/>
    </location>
</feature>
<feature type="modified residue" description="Phosphoserine; by PKC/PRKCA and PKC/PRKCB" evidence="2">
    <location>
        <position position="349"/>
    </location>
</feature>
<feature type="modified residue" description="N6-acetyllysine" evidence="2">
    <location>
        <position position="356"/>
    </location>
</feature>
<feature type="modified residue" description="Phosphoserine" evidence="2">
    <location>
        <position position="424"/>
    </location>
</feature>
<feature type="modified residue" description="Phosphoserine" evidence="2">
    <location>
        <position position="428"/>
    </location>
</feature>
<feature type="modified residue" description="Phosphoserine; by ATM" evidence="2">
    <location>
        <position position="472"/>
    </location>
</feature>
<feature type="modified residue" description="Phosphoserine; by ATM" evidence="2">
    <location>
        <position position="480"/>
    </location>
</feature>
<feature type="splice variant" id="VSP_000591" description="In isoform 2." evidence="6">
    <location>
        <begin position="132"/>
        <end position="229"/>
    </location>
</feature>
<proteinExistence type="evidence at protein level"/>
<evidence type="ECO:0000250" key="1"/>
<evidence type="ECO:0000250" key="2">
    <source>
        <dbReference type="UniProtKB" id="P15336"/>
    </source>
</evidence>
<evidence type="ECO:0000255" key="3">
    <source>
        <dbReference type="PROSITE-ProRule" id="PRU00042"/>
    </source>
</evidence>
<evidence type="ECO:0000255" key="4">
    <source>
        <dbReference type="PROSITE-ProRule" id="PRU00978"/>
    </source>
</evidence>
<evidence type="ECO:0000256" key="5">
    <source>
        <dbReference type="SAM" id="MobiDB-lite"/>
    </source>
</evidence>
<evidence type="ECO:0000303" key="6">
    <source>
    </source>
</evidence>
<evidence type="ECO:0000305" key="7"/>
<evidence type="ECO:0007744" key="8">
    <source>
    </source>
</evidence>
<organism>
    <name type="scientific">Rattus norvegicus</name>
    <name type="common">Rat</name>
    <dbReference type="NCBI Taxonomy" id="10116"/>
    <lineage>
        <taxon>Eukaryota</taxon>
        <taxon>Metazoa</taxon>
        <taxon>Chordata</taxon>
        <taxon>Craniata</taxon>
        <taxon>Vertebrata</taxon>
        <taxon>Euteleostomi</taxon>
        <taxon>Mammalia</taxon>
        <taxon>Eutheria</taxon>
        <taxon>Euarchontoglires</taxon>
        <taxon>Glires</taxon>
        <taxon>Rodentia</taxon>
        <taxon>Myomorpha</taxon>
        <taxon>Muroidea</taxon>
        <taxon>Muridae</taxon>
        <taxon>Murinae</taxon>
        <taxon>Rattus</taxon>
    </lineage>
</organism>
<keyword id="KW-0007">Acetylation</keyword>
<keyword id="KW-0010">Activator</keyword>
<keyword id="KW-0025">Alternative splicing</keyword>
<keyword id="KW-0963">Cytoplasm</keyword>
<keyword id="KW-0227">DNA damage</keyword>
<keyword id="KW-0238">DNA-binding</keyword>
<keyword id="KW-0472">Membrane</keyword>
<keyword id="KW-0479">Metal-binding</keyword>
<keyword id="KW-0496">Mitochondrion</keyword>
<keyword id="KW-1000">Mitochondrion outer membrane</keyword>
<keyword id="KW-0539">Nucleus</keyword>
<keyword id="KW-0597">Phosphoprotein</keyword>
<keyword id="KW-1185">Reference proteome</keyword>
<keyword id="KW-0804">Transcription</keyword>
<keyword id="KW-0805">Transcription regulation</keyword>
<keyword id="KW-0862">Zinc</keyword>
<keyword id="KW-0863">Zinc-finger</keyword>
<protein>
    <recommendedName>
        <fullName>Cyclic AMP-dependent transcription factor ATF-2</fullName>
        <shortName>cAMP-dependent transcription factor ATF-2</shortName>
    </recommendedName>
    <alternativeName>
        <fullName>Activating transcription factor 2</fullName>
    </alternativeName>
    <alternativeName>
        <fullName>cAMP response element-binding protein CRE-BP1</fullName>
    </alternativeName>
</protein>
<comment type="function">
    <text evidence="1">Transcriptional activator which regulates the transcription of various genes, including those involved in anti-apoptosis, cell growth, and DNA damage response. Dependent on its binding partner, binds to CRE (cAMP response element) consensus sequences (5'-TGACGTCA-3') or to AP-1 (activator protein 1) consensus sequences (5'-TGACTCA-3'). In the nucleus, contributes to global transcription and the DNA damage response, in addition to specific transcriptional activities that are related to cell development, proliferation and death. In the cytoplasm, interacts with and perturbs HK1- and VDAC1-containing complexes at the mitochondrial outer membrane, thereby impairing mitochondrial membrane potential, inducing mitochondrial leakage and promoting cell death. The phosphorylated form (mediated by ATM) plays a role in the DNA damage response and is involved in the ionizing radiation (IR)-induced S phase checkpoint control and in the recruitment of the MRN complex into the IR-induced foci (IRIF). Exhibits histone acetyltransferase (HAT) activity which specifically acetylates histones H2B and H4 in vitro. In concert with CUL3 and RBX1, promotes the degradation of KAT5 thereby attenuating its ability to acetylate and activate ATM. Can elicit oncogenic or tumor suppressor activities depending on the tissue or cell type (By similarity).</text>
</comment>
<comment type="subunit">
    <text evidence="1">Binds DNA as a dimer and can form a homodimer in the absence of DNA. Can form a heterodimer with JUN. Heterodimerization is essential for its transcriptional activity. Interacts with SMAD3 and SMAD4. Binds through its N-terminal region to UTF1 which acts as a coactivator of ATF2 transcriptional activity (By similarity). Interacts with the HK1/VDAC1 complex. Interacts with NBN, MRE11, XPO1, KAT5 and CUL3 (By similarity).</text>
</comment>
<comment type="subcellular location">
    <subcellularLocation>
        <location>Nucleus</location>
    </subcellularLocation>
    <subcellularLocation>
        <location evidence="1">Cytoplasm</location>
    </subcellularLocation>
    <subcellularLocation>
        <location evidence="1">Mitochondrion outer membrane</location>
    </subcellularLocation>
    <text evidence="1">Shuttles between the cytoplasm and the nucleus and heterodimerization with JUN is essential for the nuclear localization. Localization to the cytoplasm is observed under conditions of cellular stress and in disease states. Localizes at the mitochondrial outer membrane in response to genotoxic stress. Phosphorylation at Thr-34 is required for its nuclear localization and negatively regulates its mitochondrial localization. Colocalizes with the MRN complex in the IR-induced foci (IRIF) (By similarity).</text>
</comment>
<comment type="alternative products">
    <event type="alternative splicing"/>
    <isoform>
        <id>Q00969-1</id>
        <name>1</name>
        <sequence type="displayed"/>
    </isoform>
    <isoform>
        <id>Q00969-2</id>
        <name>2</name>
        <sequence type="described" ref="VSP_000591"/>
    </isoform>
</comment>
<comment type="PTM">
    <text evidence="2">Phosphorylation of Thr-51 by MAPK14 and MAPK11, and at Thr-53 by MAPK1/ERK2, MAPK3/ERK1, MAPK11, MAPK12 and MAPK14 in response to external stimulus like insulin causes increased transcriptional activity. Phosphorylated by PLK3 following hyperosmotic stress. Also phosphorylated and activated by JNK and CaMK4. ATM-mediated phosphorylation at Ser-472 and Ser-480 stimulates its function in DNA damage response. Phosphorylation at Ser-44, Thr-55 and Ser-103 activates its transcriptional activity. Phosphorylation at Thr-51 or Thr-53 enhances acetylation of histones H2B and H4.</text>
</comment>
<comment type="similarity">
    <text evidence="7">Belongs to the bZIP family. ATF subfamily.</text>
</comment>
<comment type="caution">
    <text evidence="2 7">Appears to have histone acetyltransferase (HAT) activity, specifically towards histones H2B and H4 in vitro (By similarity). However, it is not clear if this activity is genuine or caused by contamination with other histone acetyltransferases in the assay.</text>
</comment>
<name>ATF2_RAT</name>
<gene>
    <name type="primary">Atf2</name>
</gene>
<accession>Q00969</accession>
<accession>Q62870</accession>
<sequence length="487" mass="52287">MSDDKPFLCTAPGCGQRFTNEDHLAVHKHKHEMTLKFGPARNDSVIVADQTPTPTRFLKNCEEVGLFNELASPFENEFKKASEDDIKKMPLDLSPLATPIIRSKIEEPSVVETTHQDSPLPHPESTTNDEKEIPLAQTAQPTSAIVRPASLQVPNVLLTSSDSSVIIQQAVPSPTSSTVITQAPSSNRPIVPVPGPFPLLLHLPNGQTMPVAIPASITSSNVHVPAAVPLVRPVTMVPSVPGIPGPSSPQPVQSEAKMRLKAALTQQHPPVTNGDTVKGHGSGLVRAQSEESRPQSLQQPATSTTETPASPAHTTPQTQNTSGRRRRAANEDPDEKRRKFLERNRAAASRCRQKRKVWVQSLEKKAEDLSSLNGQLQSEVTLLRNEVAQLKQLLLAHKDCPVTAMQKKSGYHTADKDDSSEDLSVPSSPHTEAIQHSSVSTSNGVSSTSKTEAGATSVLTQMADQSTEPALSQIVMAPSSQAQPSGS</sequence>
<dbReference type="EMBL" id="M65148">
    <property type="protein sequence ID" value="AAA42013.1"/>
    <property type="molecule type" value="mRNA"/>
</dbReference>
<dbReference type="EMBL" id="U38938">
    <property type="protein sequence ID" value="AAA93263.1"/>
    <property type="molecule type" value="mRNA"/>
</dbReference>
<dbReference type="PIR" id="A39429">
    <property type="entry name" value="A39429"/>
</dbReference>
<dbReference type="RefSeq" id="NP_112280.1">
    <molecule id="Q00969-1"/>
    <property type="nucleotide sequence ID" value="NM_031018.2"/>
</dbReference>
<dbReference type="RefSeq" id="XP_038961844.1">
    <molecule id="Q00969-2"/>
    <property type="nucleotide sequence ID" value="XM_039105916.2"/>
</dbReference>
<dbReference type="RefSeq" id="XP_063140694.1">
    <molecule id="Q00969-1"/>
    <property type="nucleotide sequence ID" value="XM_063284624.1"/>
</dbReference>
<dbReference type="RefSeq" id="XP_063140695.1">
    <molecule id="Q00969-1"/>
    <property type="nucleotide sequence ID" value="XM_063284625.1"/>
</dbReference>
<dbReference type="RefSeq" id="XP_063140698.1">
    <molecule id="Q00969-2"/>
    <property type="nucleotide sequence ID" value="XM_063284628.1"/>
</dbReference>
<dbReference type="BMRB" id="Q00969"/>
<dbReference type="SMR" id="Q00969"/>
<dbReference type="BioGRID" id="249547">
    <property type="interactions" value="3"/>
</dbReference>
<dbReference type="CORUM" id="Q00969"/>
<dbReference type="FunCoup" id="Q00969">
    <property type="interactions" value="4499"/>
</dbReference>
<dbReference type="STRING" id="10116.ENSRNOP00000002174"/>
<dbReference type="GlyGen" id="Q00969">
    <property type="glycosylation" value="2 sites, 1 O-linked glycan (1 site)"/>
</dbReference>
<dbReference type="iPTMnet" id="Q00969"/>
<dbReference type="PhosphoSitePlus" id="Q00969"/>
<dbReference type="PaxDb" id="10116-ENSRNOP00000002174"/>
<dbReference type="Ensembl" id="ENSRNOT00000050513.5">
    <molecule id="Q00969-2"/>
    <property type="protein sequence ID" value="ENSRNOP00000046001.3"/>
    <property type="gene ID" value="ENSRNOG00000001597.9"/>
</dbReference>
<dbReference type="GeneID" id="81647"/>
<dbReference type="KEGG" id="rno:81647"/>
<dbReference type="UCSC" id="RGD:621862">
    <molecule id="Q00969-1"/>
    <property type="organism name" value="rat"/>
</dbReference>
<dbReference type="AGR" id="RGD:621862"/>
<dbReference type="CTD" id="1386"/>
<dbReference type="RGD" id="621862">
    <property type="gene designation" value="Atf2"/>
</dbReference>
<dbReference type="VEuPathDB" id="HostDB:ENSRNOG00000001597"/>
<dbReference type="eggNOG" id="KOG1414">
    <property type="taxonomic scope" value="Eukaryota"/>
</dbReference>
<dbReference type="GeneTree" id="ENSGT00940000156582"/>
<dbReference type="HOGENOM" id="CLU_021564_0_0_1"/>
<dbReference type="InParanoid" id="Q00969"/>
<dbReference type="OrthoDB" id="295274at2759"/>
<dbReference type="PhylomeDB" id="Q00969"/>
<dbReference type="Reactome" id="R-RNO-3214847">
    <property type="pathway name" value="HATs acetylate histones"/>
</dbReference>
<dbReference type="Reactome" id="R-RNO-450341">
    <property type="pathway name" value="Activation of the AP-1 family of transcription factors"/>
</dbReference>
<dbReference type="Reactome" id="R-RNO-9018519">
    <property type="pathway name" value="Estrogen-dependent gene expression"/>
</dbReference>
<dbReference type="PRO" id="PR:Q00969"/>
<dbReference type="Proteomes" id="UP000002494">
    <property type="component" value="Chromosome 3"/>
</dbReference>
<dbReference type="Bgee" id="ENSRNOG00000001597">
    <property type="expression patterns" value="Expressed in frontal cortex and 19 other cell types or tissues"/>
</dbReference>
<dbReference type="GO" id="GO:0016602">
    <property type="term" value="C:CCAAT-binding factor complex"/>
    <property type="evidence" value="ECO:0000314"/>
    <property type="project" value="MGI"/>
</dbReference>
<dbReference type="GO" id="GO:0000785">
    <property type="term" value="C:chromatin"/>
    <property type="evidence" value="ECO:0000266"/>
    <property type="project" value="RGD"/>
</dbReference>
<dbReference type="GO" id="GO:0005737">
    <property type="term" value="C:cytoplasm"/>
    <property type="evidence" value="ECO:0000250"/>
    <property type="project" value="UniProtKB"/>
</dbReference>
<dbReference type="GO" id="GO:1902562">
    <property type="term" value="C:H4 histone acetyltransferase complex"/>
    <property type="evidence" value="ECO:0000266"/>
    <property type="project" value="RGD"/>
</dbReference>
<dbReference type="GO" id="GO:0016020">
    <property type="term" value="C:membrane"/>
    <property type="evidence" value="ECO:0000266"/>
    <property type="project" value="RGD"/>
</dbReference>
<dbReference type="GO" id="GO:0005741">
    <property type="term" value="C:mitochondrial outer membrane"/>
    <property type="evidence" value="ECO:0000250"/>
    <property type="project" value="UniProtKB"/>
</dbReference>
<dbReference type="GO" id="GO:0005634">
    <property type="term" value="C:nucleus"/>
    <property type="evidence" value="ECO:0000266"/>
    <property type="project" value="RGD"/>
</dbReference>
<dbReference type="GO" id="GO:0090575">
    <property type="term" value="C:RNA polymerase II transcription regulator complex"/>
    <property type="evidence" value="ECO:0000266"/>
    <property type="project" value="RGD"/>
</dbReference>
<dbReference type="GO" id="GO:0035861">
    <property type="term" value="C:site of double-strand break"/>
    <property type="evidence" value="ECO:0000250"/>
    <property type="project" value="UniProtKB"/>
</dbReference>
<dbReference type="GO" id="GO:0035497">
    <property type="term" value="F:cAMP response element binding"/>
    <property type="evidence" value="ECO:0000314"/>
    <property type="project" value="RGD"/>
</dbReference>
<dbReference type="GO" id="GO:0008140">
    <property type="term" value="F:cAMP response element binding protein binding"/>
    <property type="evidence" value="ECO:0000266"/>
    <property type="project" value="RGD"/>
</dbReference>
<dbReference type="GO" id="GO:0003682">
    <property type="term" value="F:chromatin binding"/>
    <property type="evidence" value="ECO:0000266"/>
    <property type="project" value="RGD"/>
</dbReference>
<dbReference type="GO" id="GO:0000987">
    <property type="term" value="F:cis-regulatory region sequence-specific DNA binding"/>
    <property type="evidence" value="ECO:0000266"/>
    <property type="project" value="RGD"/>
</dbReference>
<dbReference type="GO" id="GO:0003677">
    <property type="term" value="F:DNA binding"/>
    <property type="evidence" value="ECO:0000266"/>
    <property type="project" value="RGD"/>
</dbReference>
<dbReference type="GO" id="GO:0001228">
    <property type="term" value="F:DNA-binding transcription activator activity, RNA polymerase II-specific"/>
    <property type="evidence" value="ECO:0000266"/>
    <property type="project" value="RGD"/>
</dbReference>
<dbReference type="GO" id="GO:0003700">
    <property type="term" value="F:DNA-binding transcription factor activity"/>
    <property type="evidence" value="ECO:0000266"/>
    <property type="project" value="RGD"/>
</dbReference>
<dbReference type="GO" id="GO:0000981">
    <property type="term" value="F:DNA-binding transcription factor activity, RNA polymerase II-specific"/>
    <property type="evidence" value="ECO:0000318"/>
    <property type="project" value="GO_Central"/>
</dbReference>
<dbReference type="GO" id="GO:0044013">
    <property type="term" value="F:histone H2B acetyltransferase activity"/>
    <property type="evidence" value="ECO:0000266"/>
    <property type="project" value="RGD"/>
</dbReference>
<dbReference type="GO" id="GO:0010485">
    <property type="term" value="F:histone H4 acetyltransferase activity"/>
    <property type="evidence" value="ECO:0000266"/>
    <property type="project" value="RGD"/>
</dbReference>
<dbReference type="GO" id="GO:0042802">
    <property type="term" value="F:identical protein binding"/>
    <property type="evidence" value="ECO:0000266"/>
    <property type="project" value="RGD"/>
</dbReference>
<dbReference type="GO" id="GO:0043522">
    <property type="term" value="F:leucine zipper domain binding"/>
    <property type="evidence" value="ECO:0000266"/>
    <property type="project" value="RGD"/>
</dbReference>
<dbReference type="GO" id="GO:1990841">
    <property type="term" value="F:promoter-specific chromatin binding"/>
    <property type="evidence" value="ECO:0000266"/>
    <property type="project" value="RGD"/>
</dbReference>
<dbReference type="GO" id="GO:0046982">
    <property type="term" value="F:protein heterodimerization activity"/>
    <property type="evidence" value="ECO:0000266"/>
    <property type="project" value="RGD"/>
</dbReference>
<dbReference type="GO" id="GO:0042803">
    <property type="term" value="F:protein homodimerization activity"/>
    <property type="evidence" value="ECO:0000266"/>
    <property type="project" value="RGD"/>
</dbReference>
<dbReference type="GO" id="GO:0019901">
    <property type="term" value="F:protein kinase binding"/>
    <property type="evidence" value="ECO:0000266"/>
    <property type="project" value="RGD"/>
</dbReference>
<dbReference type="GO" id="GO:0044877">
    <property type="term" value="F:protein-containing complex binding"/>
    <property type="evidence" value="ECO:0000353"/>
    <property type="project" value="RGD"/>
</dbReference>
<dbReference type="GO" id="GO:0000978">
    <property type="term" value="F:RNA polymerase II cis-regulatory region sequence-specific DNA binding"/>
    <property type="evidence" value="ECO:0000266"/>
    <property type="project" value="RGD"/>
</dbReference>
<dbReference type="GO" id="GO:0000977">
    <property type="term" value="F:RNA polymerase II transcription regulatory region sequence-specific DNA binding"/>
    <property type="evidence" value="ECO:0000266"/>
    <property type="project" value="RGD"/>
</dbReference>
<dbReference type="GO" id="GO:0061629">
    <property type="term" value="F:RNA polymerase II-specific DNA-binding transcription factor binding"/>
    <property type="evidence" value="ECO:0000266"/>
    <property type="project" value="RGD"/>
</dbReference>
<dbReference type="GO" id="GO:0043565">
    <property type="term" value="F:sequence-specific DNA binding"/>
    <property type="evidence" value="ECO:0000314"/>
    <property type="project" value="RGD"/>
</dbReference>
<dbReference type="GO" id="GO:1990837">
    <property type="term" value="F:sequence-specific double-stranded DNA binding"/>
    <property type="evidence" value="ECO:0000266"/>
    <property type="project" value="RGD"/>
</dbReference>
<dbReference type="GO" id="GO:0008270">
    <property type="term" value="F:zinc ion binding"/>
    <property type="evidence" value="ECO:0007669"/>
    <property type="project" value="UniProtKB-KW"/>
</dbReference>
<dbReference type="GO" id="GO:0021742">
    <property type="term" value="P:abducens nucleus development"/>
    <property type="evidence" value="ECO:0000266"/>
    <property type="project" value="RGD"/>
</dbReference>
<dbReference type="GO" id="GO:0060612">
    <property type="term" value="P:adipose tissue development"/>
    <property type="evidence" value="ECO:0000266"/>
    <property type="project" value="RGD"/>
</dbReference>
<dbReference type="GO" id="GO:0097186">
    <property type="term" value="P:amelogenesis"/>
    <property type="evidence" value="ECO:0000314"/>
    <property type="project" value="RGD"/>
</dbReference>
<dbReference type="GO" id="GO:0006915">
    <property type="term" value="P:apoptotic process"/>
    <property type="evidence" value="ECO:0000266"/>
    <property type="project" value="RGD"/>
</dbReference>
<dbReference type="GO" id="GO:1902742">
    <property type="term" value="P:apoptotic process involved in development"/>
    <property type="evidence" value="ECO:0000266"/>
    <property type="project" value="RGD"/>
</dbReference>
<dbReference type="GO" id="GO:0030509">
    <property type="term" value="P:BMP signaling pathway"/>
    <property type="evidence" value="ECO:0000266"/>
    <property type="project" value="RGD"/>
</dbReference>
<dbReference type="GO" id="GO:0003360">
    <property type="term" value="P:brainstem development"/>
    <property type="evidence" value="ECO:0000266"/>
    <property type="project" value="RGD"/>
</dbReference>
<dbReference type="GO" id="GO:0072740">
    <property type="term" value="P:cellular response to anisomycin"/>
    <property type="evidence" value="ECO:0000266"/>
    <property type="project" value="RGD"/>
</dbReference>
<dbReference type="GO" id="GO:1990253">
    <property type="term" value="P:cellular response to leucine starvation"/>
    <property type="evidence" value="ECO:0000266"/>
    <property type="project" value="RGD"/>
</dbReference>
<dbReference type="GO" id="GO:0034599">
    <property type="term" value="P:cellular response to oxidative stress"/>
    <property type="evidence" value="ECO:0000266"/>
    <property type="project" value="RGD"/>
</dbReference>
<dbReference type="GO" id="GO:0098586">
    <property type="term" value="P:cellular response to virus"/>
    <property type="evidence" value="ECO:0000266"/>
    <property type="project" value="RGD"/>
</dbReference>
<dbReference type="GO" id="GO:0060245">
    <property type="term" value="P:detection of cell density"/>
    <property type="evidence" value="ECO:0000266"/>
    <property type="project" value="RGD"/>
</dbReference>
<dbReference type="GO" id="GO:0006974">
    <property type="term" value="P:DNA damage response"/>
    <property type="evidence" value="ECO:0000250"/>
    <property type="project" value="UniProtKB"/>
</dbReference>
<dbReference type="GO" id="GO:0021754">
    <property type="term" value="P:facial nucleus development"/>
    <property type="evidence" value="ECO:0000266"/>
    <property type="project" value="RGD"/>
</dbReference>
<dbReference type="GO" id="GO:0010467">
    <property type="term" value="P:gene expression"/>
    <property type="evidence" value="ECO:0000266"/>
    <property type="project" value="RGD"/>
</dbReference>
<dbReference type="GO" id="GO:0003418">
    <property type="term" value="P:growth plate cartilage chondrocyte differentiation"/>
    <property type="evidence" value="ECO:0000266"/>
    <property type="project" value="RGD"/>
</dbReference>
<dbReference type="GO" id="GO:0003419">
    <property type="term" value="P:growth plate cartilage chondrocyte proliferation"/>
    <property type="evidence" value="ECO:0000266"/>
    <property type="project" value="RGD"/>
</dbReference>
<dbReference type="GO" id="GO:0007507">
    <property type="term" value="P:heart development"/>
    <property type="evidence" value="ECO:0000266"/>
    <property type="project" value="RGD"/>
</dbReference>
<dbReference type="GO" id="GO:0002244">
    <property type="term" value="P:hematopoietic progenitor cell differentiation"/>
    <property type="evidence" value="ECO:0000266"/>
    <property type="project" value="RGD"/>
</dbReference>
<dbReference type="GO" id="GO:0097284">
    <property type="term" value="P:hepatocyte apoptotic process"/>
    <property type="evidence" value="ECO:0000266"/>
    <property type="project" value="RGD"/>
</dbReference>
<dbReference type="GO" id="GO:0021743">
    <property type="term" value="P:hypoglossal nucleus development"/>
    <property type="evidence" value="ECO:0000266"/>
    <property type="project" value="RGD"/>
</dbReference>
<dbReference type="GO" id="GO:0001701">
    <property type="term" value="P:in utero embryonic development"/>
    <property type="evidence" value="ECO:0000266"/>
    <property type="project" value="RGD"/>
</dbReference>
<dbReference type="GO" id="GO:1990144">
    <property type="term" value="P:intrinsic apoptotic signaling pathway in response to hypoxia"/>
    <property type="evidence" value="ECO:0000266"/>
    <property type="project" value="RGD"/>
</dbReference>
<dbReference type="GO" id="GO:0007254">
    <property type="term" value="P:JNK cascade"/>
    <property type="evidence" value="ECO:0000266"/>
    <property type="project" value="RGD"/>
</dbReference>
<dbReference type="GO" id="GO:0006629">
    <property type="term" value="P:lipid metabolic process"/>
    <property type="evidence" value="ECO:0000266"/>
    <property type="project" value="RGD"/>
</dbReference>
<dbReference type="GO" id="GO:0001889">
    <property type="term" value="P:liver development"/>
    <property type="evidence" value="ECO:0000266"/>
    <property type="project" value="RGD"/>
</dbReference>
<dbReference type="GO" id="GO:0000165">
    <property type="term" value="P:MAPK cascade"/>
    <property type="evidence" value="ECO:0000266"/>
    <property type="project" value="RGD"/>
</dbReference>
<dbReference type="GO" id="GO:0031573">
    <property type="term" value="P:mitotic intra-S DNA damage checkpoint signaling"/>
    <property type="evidence" value="ECO:0000250"/>
    <property type="project" value="UniProtKB"/>
</dbReference>
<dbReference type="GO" id="GO:0097049">
    <property type="term" value="P:motor neuron apoptotic process"/>
    <property type="evidence" value="ECO:0000266"/>
    <property type="project" value="RGD"/>
</dbReference>
<dbReference type="GO" id="GO:0042789">
    <property type="term" value="P:mRNA transcription by RNA polymerase II"/>
    <property type="evidence" value="ECO:0000266"/>
    <property type="project" value="RGD"/>
</dbReference>
<dbReference type="GO" id="GO:0016525">
    <property type="term" value="P:negative regulation of angiogenesis"/>
    <property type="evidence" value="ECO:0000266"/>
    <property type="project" value="RGD"/>
</dbReference>
<dbReference type="GO" id="GO:0050680">
    <property type="term" value="P:negative regulation of epithelial cell proliferation"/>
    <property type="evidence" value="ECO:0000315"/>
    <property type="project" value="RGD"/>
</dbReference>
<dbReference type="GO" id="GO:0000122">
    <property type="term" value="P:negative regulation of transcription by RNA polymerase II"/>
    <property type="evidence" value="ECO:0000315"/>
    <property type="project" value="RGD"/>
</dbReference>
<dbReference type="GO" id="GO:0060052">
    <property type="term" value="P:neurofilament cytoskeleton organization"/>
    <property type="evidence" value="ECO:0000266"/>
    <property type="project" value="RGD"/>
</dbReference>
<dbReference type="GO" id="GO:0001865">
    <property type="term" value="P:NK T cell differentiation"/>
    <property type="evidence" value="ECO:0000266"/>
    <property type="project" value="RGD"/>
</dbReference>
<dbReference type="GO" id="GO:0003151">
    <property type="term" value="P:outflow tract morphogenesis"/>
    <property type="evidence" value="ECO:0000266"/>
    <property type="project" value="RGD"/>
</dbReference>
<dbReference type="GO" id="GO:0038066">
    <property type="term" value="P:p38MAPK cascade"/>
    <property type="evidence" value="ECO:0000266"/>
    <property type="project" value="RGD"/>
</dbReference>
<dbReference type="GO" id="GO:0110024">
    <property type="term" value="P:positive regulation of cardiac muscle myoblast proliferation"/>
    <property type="evidence" value="ECO:0000266"/>
    <property type="project" value="RGD"/>
</dbReference>
<dbReference type="GO" id="GO:0051091">
    <property type="term" value="P:positive regulation of DNA-binding transcription factor activity"/>
    <property type="evidence" value="ECO:0000250"/>
    <property type="project" value="UniProtKB"/>
</dbReference>
<dbReference type="GO" id="GO:0010628">
    <property type="term" value="P:positive regulation of gene expression"/>
    <property type="evidence" value="ECO:0000266"/>
    <property type="project" value="RGD"/>
</dbReference>
<dbReference type="GO" id="GO:1902110">
    <property type="term" value="P:positive regulation of mitochondrial membrane permeability involved in apoptotic process"/>
    <property type="evidence" value="ECO:0000250"/>
    <property type="project" value="UniProtKB"/>
</dbReference>
<dbReference type="GO" id="GO:0043525">
    <property type="term" value="P:positive regulation of neuron apoptotic process"/>
    <property type="evidence" value="ECO:0000315"/>
    <property type="project" value="RGD"/>
</dbReference>
<dbReference type="GO" id="GO:0045944">
    <property type="term" value="P:positive regulation of transcription by RNA polymerase II"/>
    <property type="evidence" value="ECO:0000314"/>
    <property type="project" value="RGD"/>
</dbReference>
<dbReference type="GO" id="GO:0032915">
    <property type="term" value="P:positive regulation of transforming growth factor beta2 production"/>
    <property type="evidence" value="ECO:0000266"/>
    <property type="project" value="RGD"/>
</dbReference>
<dbReference type="GO" id="GO:0006606">
    <property type="term" value="P:protein import into nucleus"/>
    <property type="evidence" value="ECO:0000266"/>
    <property type="project" value="RGD"/>
</dbReference>
<dbReference type="GO" id="GO:0006355">
    <property type="term" value="P:regulation of DNA-templated transcription"/>
    <property type="evidence" value="ECO:0000250"/>
    <property type="project" value="UniProtKB"/>
</dbReference>
<dbReference type="GO" id="GO:0006357">
    <property type="term" value="P:regulation of transcription by RNA polymerase II"/>
    <property type="evidence" value="ECO:0000266"/>
    <property type="project" value="RGD"/>
</dbReference>
<dbReference type="GO" id="GO:0006970">
    <property type="term" value="P:response to osmotic stress"/>
    <property type="evidence" value="ECO:0000250"/>
    <property type="project" value="UniProtKB"/>
</dbReference>
<dbReference type="GO" id="GO:0045815">
    <property type="term" value="P:transcription initiation-coupled chromatin remodeling"/>
    <property type="evidence" value="ECO:0000266"/>
    <property type="project" value="RGD"/>
</dbReference>
<dbReference type="GO" id="GO:0007033">
    <property type="term" value="P:vacuole organization"/>
    <property type="evidence" value="ECO:0000266"/>
    <property type="project" value="RGD"/>
</dbReference>
<dbReference type="GO" id="GO:0050872">
    <property type="term" value="P:white fat cell differentiation"/>
    <property type="evidence" value="ECO:0000266"/>
    <property type="project" value="RGD"/>
</dbReference>
<dbReference type="CDD" id="cd14687">
    <property type="entry name" value="bZIP_ATF2"/>
    <property type="match status" value="1"/>
</dbReference>
<dbReference type="CDD" id="cd12192">
    <property type="entry name" value="GCN4_cent"/>
    <property type="match status" value="1"/>
</dbReference>
<dbReference type="FunFam" id="1.20.5.170:FF:000010">
    <property type="entry name" value="Cyclic AMP-dependent transcription factor ATF-2"/>
    <property type="match status" value="1"/>
</dbReference>
<dbReference type="Gene3D" id="1.20.5.170">
    <property type="match status" value="1"/>
</dbReference>
<dbReference type="Gene3D" id="3.30.160.60">
    <property type="entry name" value="Classic Zinc Finger"/>
    <property type="match status" value="1"/>
</dbReference>
<dbReference type="InterPro" id="IPR004827">
    <property type="entry name" value="bZIP"/>
</dbReference>
<dbReference type="InterPro" id="IPR046347">
    <property type="entry name" value="bZIP_sf"/>
</dbReference>
<dbReference type="InterPro" id="IPR051027">
    <property type="entry name" value="bZIP_transcription_factors"/>
</dbReference>
<dbReference type="InterPro" id="IPR016378">
    <property type="entry name" value="TF_CRE-BP1-typ"/>
</dbReference>
<dbReference type="InterPro" id="IPR036236">
    <property type="entry name" value="Znf_C2H2_sf"/>
</dbReference>
<dbReference type="InterPro" id="IPR013087">
    <property type="entry name" value="Znf_C2H2_type"/>
</dbReference>
<dbReference type="PANTHER" id="PTHR19304">
    <property type="entry name" value="CYCLIC-AMP RESPONSE ELEMENT BINDING PROTEIN"/>
    <property type="match status" value="1"/>
</dbReference>
<dbReference type="Pfam" id="PF00170">
    <property type="entry name" value="bZIP_1"/>
    <property type="match status" value="1"/>
</dbReference>
<dbReference type="PIRSF" id="PIRSF003153">
    <property type="entry name" value="ATF2_CRE-BP1"/>
    <property type="match status" value="1"/>
</dbReference>
<dbReference type="SMART" id="SM00338">
    <property type="entry name" value="BRLZ"/>
    <property type="match status" value="1"/>
</dbReference>
<dbReference type="SUPFAM" id="SSF57667">
    <property type="entry name" value="beta-beta-alpha zinc fingers"/>
    <property type="match status" value="1"/>
</dbReference>
<dbReference type="SUPFAM" id="SSF57959">
    <property type="entry name" value="Leucine zipper domain"/>
    <property type="match status" value="1"/>
</dbReference>
<dbReference type="PROSITE" id="PS50217">
    <property type="entry name" value="BZIP"/>
    <property type="match status" value="1"/>
</dbReference>
<dbReference type="PROSITE" id="PS00036">
    <property type="entry name" value="BZIP_BASIC"/>
    <property type="match status" value="1"/>
</dbReference>
<dbReference type="PROSITE" id="PS00028">
    <property type="entry name" value="ZINC_FINGER_C2H2_1"/>
    <property type="match status" value="1"/>
</dbReference>
<dbReference type="PROSITE" id="PS50157">
    <property type="entry name" value="ZINC_FINGER_C2H2_2"/>
    <property type="match status" value="1"/>
</dbReference>